<comment type="function">
    <text evidence="1">Core subunit of the mitochondrial membrane respiratory chain NADH dehydrogenase (Complex I) which catalyzes electron transfer from NADH through the respiratory chain, using ubiquinone as an electron acceptor. Essential for the catalytic activity and assembly of complex I.</text>
</comment>
<comment type="catalytic activity">
    <reaction evidence="1">
        <text>a ubiquinone + NADH + 5 H(+)(in) = a ubiquinol + NAD(+) + 4 H(+)(out)</text>
        <dbReference type="Rhea" id="RHEA:29091"/>
        <dbReference type="Rhea" id="RHEA-COMP:9565"/>
        <dbReference type="Rhea" id="RHEA-COMP:9566"/>
        <dbReference type="ChEBI" id="CHEBI:15378"/>
        <dbReference type="ChEBI" id="CHEBI:16389"/>
        <dbReference type="ChEBI" id="CHEBI:17976"/>
        <dbReference type="ChEBI" id="CHEBI:57540"/>
        <dbReference type="ChEBI" id="CHEBI:57945"/>
        <dbReference type="EC" id="7.1.1.2"/>
    </reaction>
</comment>
<comment type="subunit">
    <text evidence="2">Core subunit of respiratory chain NADH dehydrogenase (Complex I) which is composed of 45 different subunits.</text>
</comment>
<comment type="subcellular location">
    <subcellularLocation>
        <location evidence="2">Mitochondrion inner membrane</location>
        <topology evidence="3">Multi-pass membrane protein</topology>
    </subcellularLocation>
</comment>
<comment type="similarity">
    <text evidence="4">Belongs to the complex I subunit 5 family.</text>
</comment>
<accession>Q2I3G4</accession>
<reference key="1">
    <citation type="journal article" date="2006" name="PLoS Biol.">
        <title>Complete mitochondrial genome and phylogeny of Pleistocene mammoth Mammuthus primigenius.</title>
        <authorList>
            <person name="Rogaev E.I."/>
            <person name="Moliaka Y.K."/>
            <person name="Malyarchuk B.A."/>
            <person name="Kondrashov F.A."/>
            <person name="Derenko M.V."/>
            <person name="Chumakov I."/>
            <person name="Grigorenko A.P."/>
        </authorList>
    </citation>
    <scope>NUCLEOTIDE SEQUENCE [GENOMIC DNA]</scope>
    <source>
        <tissue>Blood</tissue>
    </source>
</reference>
<gene>
    <name type="primary">MT-ND5</name>
    <name type="synonym">MTND5</name>
    <name type="synonym">NADH5</name>
    <name type="synonym">ND5</name>
</gene>
<sequence>MKVINLIPTLTLTSLIILTLPITMTLLQNNKTNCFLYITKMAVTCAFAISLIPTLLFLQSNQEAYISNWHWMTIQTLKLSLSFKLDFFSLTFMPIALFITWSIMEFSLWYMHSDPHINRFFKYLLLFLITMLILVSANNLLQLFMGWEGVGIMSFLLISWWHGRTDANTAALQAMLYNRIGDMGFIMMMAWFIIHLNSWEFQQIFLTNPKNTTLPLLGLLLASAGKSAQFGLHPWLPSAMEGPTPVSALLHSSTMVMAGVFTLIRFYPLMENNLTIQTSTLCLGAITTLFTAICALTQNDIKKIIALSTSSQLGLMMVTIGINQPHLAFTHMCTHAFFKAMLFLSSGSIIHNLDNEQDIRKMGGLYKTMPITSTAIIIGSLALTGMPFLTGFYSKDPIIETANMSYINTWALLITLIAVSMTASYSTRIIFFALLGQPRYPTLIQVNENNPYLINPIKRLILGSIFMGFFISMNTIPHTTPQMTMPPHLKFMALAVTLLGFTVATELNNMTHNLTFKQPSRMHTFSTTLGYYPTTTHRILPYLSLTMSQNLATTIMDSIWLEKMIPKNLTTMQKTAASLVSNQKGLMKLYFLSFLLSITLGLLITL</sequence>
<organism>
    <name type="scientific">Elephas maximus</name>
    <name type="common">Indian elephant</name>
    <dbReference type="NCBI Taxonomy" id="9783"/>
    <lineage>
        <taxon>Eukaryota</taxon>
        <taxon>Metazoa</taxon>
        <taxon>Chordata</taxon>
        <taxon>Craniata</taxon>
        <taxon>Vertebrata</taxon>
        <taxon>Euteleostomi</taxon>
        <taxon>Mammalia</taxon>
        <taxon>Eutheria</taxon>
        <taxon>Afrotheria</taxon>
        <taxon>Proboscidea</taxon>
        <taxon>Elephantidae</taxon>
        <taxon>Elephas</taxon>
    </lineage>
</organism>
<name>NU5M_ELEMA</name>
<feature type="chain" id="PRO_0000232854" description="NADH-ubiquinone oxidoreductase chain 5">
    <location>
        <begin position="1"/>
        <end position="606"/>
    </location>
</feature>
<feature type="transmembrane region" description="Helical" evidence="3">
    <location>
        <begin position="3"/>
        <end position="23"/>
    </location>
</feature>
<feature type="transmembrane region" description="Helical" evidence="3">
    <location>
        <begin position="38"/>
        <end position="58"/>
    </location>
</feature>
<feature type="transmembrane region" description="Helical" evidence="3">
    <location>
        <begin position="87"/>
        <end position="107"/>
    </location>
</feature>
<feature type="transmembrane region" description="Helical" evidence="3">
    <location>
        <begin position="124"/>
        <end position="144"/>
    </location>
</feature>
<feature type="transmembrane region" description="Helical" evidence="3">
    <location>
        <begin position="180"/>
        <end position="200"/>
    </location>
</feature>
<feature type="transmembrane region" description="Helical" evidence="3">
    <location>
        <begin position="216"/>
        <end position="236"/>
    </location>
</feature>
<feature type="transmembrane region" description="Helical" evidence="3">
    <location>
        <begin position="244"/>
        <end position="264"/>
    </location>
</feature>
<feature type="transmembrane region" description="Helical" evidence="3">
    <location>
        <begin position="276"/>
        <end position="296"/>
    </location>
</feature>
<feature type="transmembrane region" description="Helical" evidence="3">
    <location>
        <begin position="304"/>
        <end position="323"/>
    </location>
</feature>
<feature type="transmembrane region" description="Helical" evidence="3">
    <location>
        <begin position="328"/>
        <end position="350"/>
    </location>
</feature>
<feature type="transmembrane region" description="Helical" evidence="3">
    <location>
        <begin position="369"/>
        <end position="389"/>
    </location>
</feature>
<feature type="transmembrane region" description="Helical" evidence="3">
    <location>
        <begin position="404"/>
        <end position="424"/>
    </location>
</feature>
<feature type="transmembrane region" description="Helical" evidence="3">
    <location>
        <begin position="460"/>
        <end position="480"/>
    </location>
</feature>
<feature type="transmembrane region" description="Helical" evidence="3">
    <location>
        <begin position="483"/>
        <end position="503"/>
    </location>
</feature>
<feature type="transmembrane region" description="Helical" evidence="3">
    <location>
        <begin position="586"/>
        <end position="606"/>
    </location>
</feature>
<keyword id="KW-0249">Electron transport</keyword>
<keyword id="KW-0472">Membrane</keyword>
<keyword id="KW-0496">Mitochondrion</keyword>
<keyword id="KW-0999">Mitochondrion inner membrane</keyword>
<keyword id="KW-0520">NAD</keyword>
<keyword id="KW-0679">Respiratory chain</keyword>
<keyword id="KW-1278">Translocase</keyword>
<keyword id="KW-0812">Transmembrane</keyword>
<keyword id="KW-1133">Transmembrane helix</keyword>
<keyword id="KW-0813">Transport</keyword>
<keyword id="KW-0830">Ubiquinone</keyword>
<evidence type="ECO:0000250" key="1">
    <source>
        <dbReference type="UniProtKB" id="P03915"/>
    </source>
</evidence>
<evidence type="ECO:0000250" key="2">
    <source>
        <dbReference type="UniProtKB" id="P03920"/>
    </source>
</evidence>
<evidence type="ECO:0000255" key="3"/>
<evidence type="ECO:0000305" key="4"/>
<protein>
    <recommendedName>
        <fullName>NADH-ubiquinone oxidoreductase chain 5</fullName>
        <ecNumber evidence="1">7.1.1.2</ecNumber>
    </recommendedName>
    <alternativeName>
        <fullName>NADH dehydrogenase subunit 5</fullName>
    </alternativeName>
</protein>
<proteinExistence type="inferred from homology"/>
<geneLocation type="mitochondrion"/>
<dbReference type="EC" id="7.1.1.2" evidence="1"/>
<dbReference type="EMBL" id="DQ316068">
    <property type="protein sequence ID" value="ABC17901.1"/>
    <property type="molecule type" value="Genomic_DNA"/>
</dbReference>
<dbReference type="RefSeq" id="YP_626377.1">
    <property type="nucleotide sequence ID" value="NC_005129.2"/>
</dbReference>
<dbReference type="SMR" id="Q2I3G4"/>
<dbReference type="GeneID" id="2610372"/>
<dbReference type="CTD" id="4540"/>
<dbReference type="GO" id="GO:0005743">
    <property type="term" value="C:mitochondrial inner membrane"/>
    <property type="evidence" value="ECO:0000250"/>
    <property type="project" value="UniProtKB"/>
</dbReference>
<dbReference type="GO" id="GO:0008137">
    <property type="term" value="F:NADH dehydrogenase (ubiquinone) activity"/>
    <property type="evidence" value="ECO:0000250"/>
    <property type="project" value="UniProtKB"/>
</dbReference>
<dbReference type="GO" id="GO:0015990">
    <property type="term" value="P:electron transport coupled proton transport"/>
    <property type="evidence" value="ECO:0007669"/>
    <property type="project" value="TreeGrafter"/>
</dbReference>
<dbReference type="GO" id="GO:0006120">
    <property type="term" value="P:mitochondrial electron transport, NADH to ubiquinone"/>
    <property type="evidence" value="ECO:0000250"/>
    <property type="project" value="UniProtKB"/>
</dbReference>
<dbReference type="GO" id="GO:0032981">
    <property type="term" value="P:mitochondrial respiratory chain complex I assembly"/>
    <property type="evidence" value="ECO:0000250"/>
    <property type="project" value="UniProtKB"/>
</dbReference>
<dbReference type="InterPro" id="IPR010934">
    <property type="entry name" value="NADH_DH_su5_C"/>
</dbReference>
<dbReference type="InterPro" id="IPR018393">
    <property type="entry name" value="NADHpl_OxRdtase_5_subgr"/>
</dbReference>
<dbReference type="InterPro" id="IPR001750">
    <property type="entry name" value="ND/Mrp_TM"/>
</dbReference>
<dbReference type="InterPro" id="IPR003945">
    <property type="entry name" value="NU5C-like"/>
</dbReference>
<dbReference type="InterPro" id="IPR001516">
    <property type="entry name" value="Proton_antipo_N"/>
</dbReference>
<dbReference type="NCBIfam" id="TIGR01974">
    <property type="entry name" value="NDH_I_L"/>
    <property type="match status" value="1"/>
</dbReference>
<dbReference type="PANTHER" id="PTHR42829">
    <property type="entry name" value="NADH-UBIQUINONE OXIDOREDUCTASE CHAIN 5"/>
    <property type="match status" value="1"/>
</dbReference>
<dbReference type="PANTHER" id="PTHR42829:SF2">
    <property type="entry name" value="NADH-UBIQUINONE OXIDOREDUCTASE CHAIN 5"/>
    <property type="match status" value="1"/>
</dbReference>
<dbReference type="Pfam" id="PF06455">
    <property type="entry name" value="NADH5_C"/>
    <property type="match status" value="1"/>
</dbReference>
<dbReference type="Pfam" id="PF00361">
    <property type="entry name" value="Proton_antipo_M"/>
    <property type="match status" value="1"/>
</dbReference>
<dbReference type="Pfam" id="PF00662">
    <property type="entry name" value="Proton_antipo_N"/>
    <property type="match status" value="1"/>
</dbReference>
<dbReference type="PRINTS" id="PR01434">
    <property type="entry name" value="NADHDHGNASE5"/>
</dbReference>